<evidence type="ECO:0000255" key="1">
    <source>
        <dbReference type="HAMAP-Rule" id="MF_01302"/>
    </source>
</evidence>
<evidence type="ECO:0000305" key="2"/>
<keyword id="KW-1185">Reference proteome</keyword>
<keyword id="KW-0687">Ribonucleoprotein</keyword>
<keyword id="KW-0689">Ribosomal protein</keyword>
<keyword id="KW-0694">RNA-binding</keyword>
<keyword id="KW-0699">rRNA-binding</keyword>
<sequence>MPATNILANLFVTLYNTEARRRGDCQVYPTSKLGVEVLGTLKKAGYIGEFEHVEDSRGGKFSVHLLAKITKCGAISPRFKVKKGEYTFWEQQYLPSYDRGMLVVTTNQGVMSHHEAAERGIGGFLIGYVY</sequence>
<dbReference type="EMBL" id="DP000238">
    <property type="protein sequence ID" value="ABK77505.1"/>
    <property type="molecule type" value="Genomic_DNA"/>
</dbReference>
<dbReference type="SMR" id="A0RVY8"/>
<dbReference type="STRING" id="414004.CENSYa_0872"/>
<dbReference type="EnsemblBacteria" id="ABK77505">
    <property type="protein sequence ID" value="ABK77505"/>
    <property type="gene ID" value="CENSYa_0872"/>
</dbReference>
<dbReference type="KEGG" id="csy:CENSYa_0872"/>
<dbReference type="PATRIC" id="fig|414004.10.peg.806"/>
<dbReference type="HOGENOM" id="CLU_098428_1_1_2"/>
<dbReference type="Proteomes" id="UP000000758">
    <property type="component" value="Chromosome"/>
</dbReference>
<dbReference type="GO" id="GO:1990904">
    <property type="term" value="C:ribonucleoprotein complex"/>
    <property type="evidence" value="ECO:0007669"/>
    <property type="project" value="UniProtKB-KW"/>
</dbReference>
<dbReference type="GO" id="GO:0005840">
    <property type="term" value="C:ribosome"/>
    <property type="evidence" value="ECO:0007669"/>
    <property type="project" value="UniProtKB-KW"/>
</dbReference>
<dbReference type="GO" id="GO:0019843">
    <property type="term" value="F:rRNA binding"/>
    <property type="evidence" value="ECO:0007669"/>
    <property type="project" value="UniProtKB-UniRule"/>
</dbReference>
<dbReference type="GO" id="GO:0003735">
    <property type="term" value="F:structural constituent of ribosome"/>
    <property type="evidence" value="ECO:0007669"/>
    <property type="project" value="InterPro"/>
</dbReference>
<dbReference type="GO" id="GO:0006412">
    <property type="term" value="P:translation"/>
    <property type="evidence" value="ECO:0007669"/>
    <property type="project" value="UniProtKB-UniRule"/>
</dbReference>
<dbReference type="Gene3D" id="3.30.1370.30">
    <property type="match status" value="1"/>
</dbReference>
<dbReference type="Gene3D" id="3.30.1490.10">
    <property type="match status" value="1"/>
</dbReference>
<dbReference type="HAMAP" id="MF_01302_A">
    <property type="entry name" value="Ribosomal_uS8_A"/>
    <property type="match status" value="1"/>
</dbReference>
<dbReference type="InterPro" id="IPR000630">
    <property type="entry name" value="Ribosomal_uS8"/>
</dbReference>
<dbReference type="InterPro" id="IPR047863">
    <property type="entry name" value="Ribosomal_uS8_CS"/>
</dbReference>
<dbReference type="InterPro" id="IPR035987">
    <property type="entry name" value="Ribosomal_uS8_sf"/>
</dbReference>
<dbReference type="NCBIfam" id="NF003115">
    <property type="entry name" value="PRK04034.1"/>
    <property type="match status" value="1"/>
</dbReference>
<dbReference type="PANTHER" id="PTHR11758">
    <property type="entry name" value="40S RIBOSOMAL PROTEIN S15A"/>
    <property type="match status" value="1"/>
</dbReference>
<dbReference type="Pfam" id="PF00410">
    <property type="entry name" value="Ribosomal_S8"/>
    <property type="match status" value="1"/>
</dbReference>
<dbReference type="SUPFAM" id="SSF56047">
    <property type="entry name" value="Ribosomal protein S8"/>
    <property type="match status" value="1"/>
</dbReference>
<dbReference type="PROSITE" id="PS00053">
    <property type="entry name" value="RIBOSOMAL_S8"/>
    <property type="match status" value="1"/>
</dbReference>
<protein>
    <recommendedName>
        <fullName evidence="1">Small ribosomal subunit protein uS8</fullName>
    </recommendedName>
    <alternativeName>
        <fullName evidence="2">30S ribosomal protein S8</fullName>
    </alternativeName>
</protein>
<reference key="1">
    <citation type="journal article" date="2006" name="Proc. Natl. Acad. Sci. U.S.A.">
        <title>Genomic analysis of the uncultivated marine crenarchaeote Cenarchaeum symbiosum.</title>
        <authorList>
            <person name="Hallam S.J."/>
            <person name="Konstantinidis K.T."/>
            <person name="Putnam N."/>
            <person name="Schleper C."/>
            <person name="Watanabe Y."/>
            <person name="Sugahara J."/>
            <person name="Preston C."/>
            <person name="de la Torre J."/>
            <person name="Richardson P.M."/>
            <person name="DeLong E.F."/>
        </authorList>
    </citation>
    <scope>NUCLEOTIDE SEQUENCE [LARGE SCALE GENOMIC DNA]</scope>
    <source>
        <strain>A</strain>
    </source>
</reference>
<gene>
    <name evidence="1" type="primary">rps8</name>
    <name type="ordered locus">CENSYa_0872</name>
</gene>
<name>RS8_CENSY</name>
<proteinExistence type="inferred from homology"/>
<feature type="chain" id="PRO_0000305763" description="Small ribosomal subunit protein uS8">
    <location>
        <begin position="1"/>
        <end position="130"/>
    </location>
</feature>
<organism>
    <name type="scientific">Cenarchaeum symbiosum (strain A)</name>
    <dbReference type="NCBI Taxonomy" id="414004"/>
    <lineage>
        <taxon>Archaea</taxon>
        <taxon>Nitrososphaerota</taxon>
        <taxon>Candidatus Cenarchaeales</taxon>
        <taxon>Candidatus Cenarchaeaceae</taxon>
        <taxon>Candidatus Cenarchaeum</taxon>
    </lineage>
</organism>
<accession>A0RVY8</accession>
<comment type="function">
    <text evidence="1">One of the primary rRNA binding proteins, it binds directly to 16S rRNA central domain where it helps coordinate assembly of the platform of the 30S subunit.</text>
</comment>
<comment type="subunit">
    <text evidence="1">Part of the 30S ribosomal subunit.</text>
</comment>
<comment type="similarity">
    <text evidence="1">Belongs to the universal ribosomal protein uS8 family.</text>
</comment>